<evidence type="ECO:0000255" key="1">
    <source>
        <dbReference type="HAMAP-Rule" id="MF_01618"/>
    </source>
</evidence>
<feature type="chain" id="PRO_1000185956" description="3-ketoacyl-CoA thiolase">
    <location>
        <begin position="1"/>
        <end position="436"/>
    </location>
</feature>
<feature type="active site" description="Acyl-thioester intermediate" evidence="1">
    <location>
        <position position="99"/>
    </location>
</feature>
<feature type="active site" description="Proton acceptor" evidence="1">
    <location>
        <position position="392"/>
    </location>
</feature>
<feature type="active site" description="Proton acceptor" evidence="1">
    <location>
        <position position="422"/>
    </location>
</feature>
<sequence length="436" mass="46823">MATKQSVTTREGDRIAIVAGLRTPFAKMATYFHGVPAVDLGKMVVNELLVRHGVQKEWVDQVVYGQVVQMPEAPNIAREIVLGTGMNVHTDAYSVSRACATSFQSTVNIAESMMAGTVQVGIAGGADSTSVSPIGVSKNLARALVDLQKTKTLGQKLNIFKRLSLRDLAPVPPAVAEYSTGLSMGQTAEQMAKTHQISREEQDKLAHRSHSLAAESWEAGKLSSEVMTAYAEPYKAALERDNNVRFDSKLEGYAKLRPVFDKKYGSVTAANATPLTDGASAVLMMTESRAKELGYTPLGYIKSYAFAAIDVWEDMLMGPSYATPIALDRAGMTLNDLTLIEMHEAFAAQTLANVKMFASDKFAKEKLGRDKATGEIDMDKFNVMGSSIAYGHPFAATGTRMITQMLNELNRRGGGSGLLTACAAGGLGAAMIVETE</sequence>
<accession>B4RTU9</accession>
<accession>F2G5T1</accession>
<dbReference type="EC" id="2.3.1.16" evidence="1"/>
<dbReference type="EMBL" id="CP001103">
    <property type="protein sequence ID" value="AEA97502.1"/>
    <property type="molecule type" value="Genomic_DNA"/>
</dbReference>
<dbReference type="RefSeq" id="WP_012517844.1">
    <property type="nucleotide sequence ID" value="NC_011138.3"/>
</dbReference>
<dbReference type="SMR" id="B4RTU9"/>
<dbReference type="KEGG" id="amc:MADE_1006800"/>
<dbReference type="HOGENOM" id="CLU_031026_2_0_6"/>
<dbReference type="UniPathway" id="UPA00659"/>
<dbReference type="Proteomes" id="UP000001870">
    <property type="component" value="Chromosome"/>
</dbReference>
<dbReference type="GO" id="GO:0005829">
    <property type="term" value="C:cytosol"/>
    <property type="evidence" value="ECO:0007669"/>
    <property type="project" value="TreeGrafter"/>
</dbReference>
<dbReference type="GO" id="GO:0003988">
    <property type="term" value="F:acetyl-CoA C-acyltransferase activity"/>
    <property type="evidence" value="ECO:0007669"/>
    <property type="project" value="UniProtKB-UniRule"/>
</dbReference>
<dbReference type="GO" id="GO:0006635">
    <property type="term" value="P:fatty acid beta-oxidation"/>
    <property type="evidence" value="ECO:0007669"/>
    <property type="project" value="UniProtKB-UniRule"/>
</dbReference>
<dbReference type="CDD" id="cd00751">
    <property type="entry name" value="thiolase"/>
    <property type="match status" value="1"/>
</dbReference>
<dbReference type="FunFam" id="3.40.47.10:FF:000011">
    <property type="entry name" value="3-ketoacyl-CoA thiolase"/>
    <property type="match status" value="1"/>
</dbReference>
<dbReference type="Gene3D" id="3.40.47.10">
    <property type="match status" value="1"/>
</dbReference>
<dbReference type="HAMAP" id="MF_01618">
    <property type="entry name" value="FadI"/>
    <property type="match status" value="1"/>
</dbReference>
<dbReference type="InterPro" id="IPR050521">
    <property type="entry name" value="3-ketoacyl-CoA_Thiolase"/>
</dbReference>
<dbReference type="InterPro" id="IPR012806">
    <property type="entry name" value="Ac-CoA_C-AcTrfase_FadI"/>
</dbReference>
<dbReference type="InterPro" id="IPR002155">
    <property type="entry name" value="Thiolase"/>
</dbReference>
<dbReference type="InterPro" id="IPR016039">
    <property type="entry name" value="Thiolase-like"/>
</dbReference>
<dbReference type="InterPro" id="IPR020610">
    <property type="entry name" value="Thiolase_AS"/>
</dbReference>
<dbReference type="InterPro" id="IPR020617">
    <property type="entry name" value="Thiolase_C"/>
</dbReference>
<dbReference type="InterPro" id="IPR020616">
    <property type="entry name" value="Thiolase_N"/>
</dbReference>
<dbReference type="NCBIfam" id="TIGR01930">
    <property type="entry name" value="AcCoA-C-Actrans"/>
    <property type="match status" value="1"/>
</dbReference>
<dbReference type="NCBIfam" id="TIGR02446">
    <property type="entry name" value="FadI"/>
    <property type="match status" value="1"/>
</dbReference>
<dbReference type="NCBIfam" id="NF006516">
    <property type="entry name" value="PRK08963.1"/>
    <property type="match status" value="1"/>
</dbReference>
<dbReference type="PANTHER" id="PTHR42689">
    <property type="entry name" value="ACETYL-COA ACYLTRANSFERASE FADA2 (3-KETOACYL-COA THIOLASE) (BETA-KETOTHIOLASE)-RELATED"/>
    <property type="match status" value="1"/>
</dbReference>
<dbReference type="PANTHER" id="PTHR42689:SF1">
    <property type="entry name" value="ACETYL-COA ACYLTRANSFERASE FADA2 (3-KETOACYL-COA THIOLASE) (BETA-KETOTHIOLASE)-RELATED"/>
    <property type="match status" value="1"/>
</dbReference>
<dbReference type="Pfam" id="PF02803">
    <property type="entry name" value="Thiolase_C"/>
    <property type="match status" value="1"/>
</dbReference>
<dbReference type="Pfam" id="PF00108">
    <property type="entry name" value="Thiolase_N"/>
    <property type="match status" value="1"/>
</dbReference>
<dbReference type="PIRSF" id="PIRSF000429">
    <property type="entry name" value="Ac-CoA_Ac_transf"/>
    <property type="match status" value="1"/>
</dbReference>
<dbReference type="SUPFAM" id="SSF53901">
    <property type="entry name" value="Thiolase-like"/>
    <property type="match status" value="2"/>
</dbReference>
<dbReference type="PROSITE" id="PS00099">
    <property type="entry name" value="THIOLASE_3"/>
    <property type="match status" value="1"/>
</dbReference>
<proteinExistence type="inferred from homology"/>
<reference key="1">
    <citation type="journal article" date="2008" name="ISME J.">
        <title>Comparative genomics of two ecotypes of the marine planktonic copiotroph Alteromonas macleodii suggests alternative lifestyles associated with different kinds of particulate organic matter.</title>
        <authorList>
            <person name="Ivars-Martinez E."/>
            <person name="Martin-Cuadrado A.-B."/>
            <person name="D'Auria G."/>
            <person name="Mira A."/>
            <person name="Ferriera S."/>
            <person name="Johnson J."/>
            <person name="Friedman R."/>
            <person name="Rodriguez-Valera F."/>
        </authorList>
    </citation>
    <scope>NUCLEOTIDE SEQUENCE [LARGE SCALE GENOMIC DNA]</scope>
    <source>
        <strain>DSM 17117 / CIP 110805 / LMG 28347 / Deep ecotype</strain>
    </source>
</reference>
<name>FADI_ALTMD</name>
<gene>
    <name evidence="1" type="primary">fadI</name>
    <name type="ordered locus">MADE_1006800</name>
</gene>
<keyword id="KW-0012">Acyltransferase</keyword>
<keyword id="KW-0963">Cytoplasm</keyword>
<keyword id="KW-0276">Fatty acid metabolism</keyword>
<keyword id="KW-0442">Lipid degradation</keyword>
<keyword id="KW-0443">Lipid metabolism</keyword>
<keyword id="KW-0808">Transferase</keyword>
<organism>
    <name type="scientific">Alteromonas mediterranea (strain DSM 17117 / CIP 110805 / LMG 28347 / Deep ecotype)</name>
    <dbReference type="NCBI Taxonomy" id="1774373"/>
    <lineage>
        <taxon>Bacteria</taxon>
        <taxon>Pseudomonadati</taxon>
        <taxon>Pseudomonadota</taxon>
        <taxon>Gammaproteobacteria</taxon>
        <taxon>Alteromonadales</taxon>
        <taxon>Alteromonadaceae</taxon>
        <taxon>Alteromonas/Salinimonas group</taxon>
        <taxon>Alteromonas</taxon>
    </lineage>
</organism>
<protein>
    <recommendedName>
        <fullName evidence="1">3-ketoacyl-CoA thiolase</fullName>
        <ecNumber evidence="1">2.3.1.16</ecNumber>
    </recommendedName>
    <alternativeName>
        <fullName evidence="1">ACSs</fullName>
    </alternativeName>
    <alternativeName>
        <fullName evidence="1">Acetyl-CoA acyltransferase</fullName>
    </alternativeName>
    <alternativeName>
        <fullName evidence="1">Acyl-CoA ligase</fullName>
    </alternativeName>
    <alternativeName>
        <fullName evidence="1">Beta-ketothiolase</fullName>
    </alternativeName>
    <alternativeName>
        <fullName evidence="1">Fatty acid oxidation complex subunit beta</fullName>
    </alternativeName>
</protein>
<comment type="function">
    <text evidence="1">Catalyzes the final step of fatty acid oxidation in which acetyl-CoA is released and the CoA ester of a fatty acid two carbons shorter is formed.</text>
</comment>
<comment type="catalytic activity">
    <reaction evidence="1">
        <text>an acyl-CoA + acetyl-CoA = a 3-oxoacyl-CoA + CoA</text>
        <dbReference type="Rhea" id="RHEA:21564"/>
        <dbReference type="ChEBI" id="CHEBI:57287"/>
        <dbReference type="ChEBI" id="CHEBI:57288"/>
        <dbReference type="ChEBI" id="CHEBI:58342"/>
        <dbReference type="ChEBI" id="CHEBI:90726"/>
        <dbReference type="EC" id="2.3.1.16"/>
    </reaction>
</comment>
<comment type="pathway">
    <text evidence="1">Lipid metabolism; fatty acid beta-oxidation.</text>
</comment>
<comment type="subunit">
    <text evidence="1">Heterotetramer of two alpha chains (FadJ) and two beta chains (FadI).</text>
</comment>
<comment type="subcellular location">
    <subcellularLocation>
        <location evidence="1">Cytoplasm</location>
    </subcellularLocation>
</comment>
<comment type="similarity">
    <text evidence="1">Belongs to the thiolase-like superfamily. Thiolase family.</text>
</comment>